<sequence>MAGGTGCVRLWGAARCWTLRRPLLAAAGGRVPTAARAWLPRGRRACDASPPWALWGQSPAAAGHWRGLWEANNRSGGGAFSGGEDASEGGAEDGASGVGGSAGGGEGPVITALTPMMIPDVFPHLPLIAVTRNPVFPRFIKIVEVKNKKLVELLRRKVHLAQPYAGVFLKKDDNNESDVVENLDEIYHTGTFVQIHEMQDLGDKLRMIVMGHRRVHINRQLEVEPEEPEGENKQKLRKKPKRGKKEAEEDGATKRPLEVVVGPGPSPAGEVLMVEVENVAHEDFQVTEEVKALTAEIVKTIRDIIALNPLYRESVLQMMQAGHRVVDNPIYLSDMGAALTGAESHELQEVLEETNIPKRLYKALSLLKKEFELSKLQQRLGREVEEKIKQTHRKYLLQEQLKIIKKELGLEKDDKDAIEEKFRERLKELVVPKHVMDVVDEELSKLGLLDNHSSEFNVTRNYLDWLTSIPWGKHSDENLDLARAQAVLEEDHYGMEDVKKRILEFIAVSQLRGSTQGKILCFYGPPGVGKTSIARSIARALNREYFRFSVGGMTDVAEIKGHRRTYVGAMPGKIIQCLKKTKTENPLVLIDEVDKIGRGYQGDPSSALLELLDPEQNANFLDHYLDVPVDLSKVLFICTANITETIPEPLRDRMEMINVSGYVAQEKLAIAERYLVPQARALCGLDESKAKLSSDVLTLLIKQYCRESGVRNLQKQVEKVLRKSAYKIVSGEAEFVEVTPENLQDFVGKPVFTVERMYDVTPPGVVMGLAWTAMGGSTLFVETSLRRPRDRDSDKGDKDGSLEVTGQLGEVMKESARIAYTFARAFLMQHDSANKFLVTSHIHLHVPEGATPKDGPSAGCTIVTALLSLALDRPVRQNLAMTGEVSLTGKVLPVGGIKEKTIAAKRAGVTCIVLPAENKKDFYDLAAFITEGLEVHFVEHYREIFDIAFPEERAEALAVER</sequence>
<proteinExistence type="evidence at protein level"/>
<gene>
    <name evidence="1" type="primary">LONP1</name>
    <name type="synonym">PRSS15</name>
</gene>
<reference key="1">
    <citation type="journal article" date="2005" name="DNA Seq.">
        <title>Nucleotide sequence for cDNA of bovine mitochondrial ATP-dependent protease and determination of N-terminus of the mature enzyme from the adrenal cortex.</title>
        <authorList>
            <person name="Yamamoto M."/>
            <person name="Hiroi T."/>
            <person name="Kohno H."/>
            <person name="Yamamoto Y."/>
            <person name="Hara M."/>
            <person name="Tanaka T."/>
            <person name="Mamba K."/>
            <person name="Watabe S."/>
        </authorList>
    </citation>
    <scope>NUCLEOTIDE SEQUENCE [MRNA]</scope>
    <scope>PARTIAL PROTEIN SEQUENCE</scope>
    <source>
        <tissue>Adrenal cortex</tissue>
    </source>
</reference>
<reference key="2">
    <citation type="submission" date="2007-02" db="EMBL/GenBank/DDBJ databases">
        <authorList>
            <consortium name="NIH - Mammalian Gene Collection (MGC) project"/>
        </authorList>
    </citation>
    <scope>NUCLEOTIDE SEQUENCE [LARGE SCALE MRNA]</scope>
    <source>
        <strain>Hereford</strain>
        <tissue>Hypothalamus</tissue>
    </source>
</reference>
<reference key="3">
    <citation type="journal article" date="2002" name="Nat. Cell Biol.">
        <title>Lon protease preferentially degrades oxidized mitochondrial aconitase by an ATP-stimulated mechanism.</title>
        <authorList>
            <person name="Bota D.A."/>
            <person name="Davies K.J."/>
        </authorList>
    </citation>
    <scope>FUNCTION</scope>
    <scope>SUBSTRATE</scope>
    <scope>SUBCELLULAR LOCATION</scope>
</reference>
<keyword id="KW-0067">ATP-binding</keyword>
<keyword id="KW-0903">Direct protein sequencing</keyword>
<keyword id="KW-0238">DNA-binding</keyword>
<keyword id="KW-0378">Hydrolase</keyword>
<keyword id="KW-0496">Mitochondrion</keyword>
<keyword id="KW-0547">Nucleotide-binding</keyword>
<keyword id="KW-0645">Protease</keyword>
<keyword id="KW-1185">Reference proteome</keyword>
<keyword id="KW-0720">Serine protease</keyword>
<keyword id="KW-0809">Transit peptide</keyword>
<accession>Q59HJ6</accession>
<accession>A3KN23</accession>
<dbReference type="EC" id="3.4.21.53" evidence="1"/>
<dbReference type="EMBL" id="AB208555">
    <property type="protein sequence ID" value="BAD91492.1"/>
    <property type="molecule type" value="mRNA"/>
</dbReference>
<dbReference type="EMBL" id="BC133505">
    <property type="protein sequence ID" value="AAI33506.1"/>
    <property type="molecule type" value="mRNA"/>
</dbReference>
<dbReference type="RefSeq" id="NP_001015569.2">
    <property type="nucleotide sequence ID" value="NM_001015569.3"/>
</dbReference>
<dbReference type="SMR" id="Q59HJ6"/>
<dbReference type="FunCoup" id="Q59HJ6">
    <property type="interactions" value="2283"/>
</dbReference>
<dbReference type="STRING" id="9913.ENSBTAP00000002350"/>
<dbReference type="MEROPS" id="S16.002"/>
<dbReference type="GlyGen" id="Q59HJ6">
    <property type="glycosylation" value="1 site, 1 O-linked glycan (1 site)"/>
</dbReference>
<dbReference type="PaxDb" id="9913-ENSBTAP00000002350"/>
<dbReference type="PeptideAtlas" id="Q59HJ6"/>
<dbReference type="GeneID" id="510796"/>
<dbReference type="KEGG" id="bta:510796"/>
<dbReference type="CTD" id="9361"/>
<dbReference type="eggNOG" id="KOG2004">
    <property type="taxonomic scope" value="Eukaryota"/>
</dbReference>
<dbReference type="HOGENOM" id="CLU_004109_1_0_1"/>
<dbReference type="InParanoid" id="Q59HJ6"/>
<dbReference type="OrthoDB" id="2411602at2759"/>
<dbReference type="TreeFam" id="TF105001"/>
<dbReference type="Proteomes" id="UP000009136">
    <property type="component" value="Unplaced"/>
</dbReference>
<dbReference type="GO" id="GO:0005759">
    <property type="term" value="C:mitochondrial matrix"/>
    <property type="evidence" value="ECO:0000314"/>
    <property type="project" value="UniProtKB"/>
</dbReference>
<dbReference type="GO" id="GO:0005524">
    <property type="term" value="F:ATP binding"/>
    <property type="evidence" value="ECO:0007669"/>
    <property type="project" value="UniProtKB-UniRule"/>
</dbReference>
<dbReference type="GO" id="GO:0016887">
    <property type="term" value="F:ATP hydrolysis activity"/>
    <property type="evidence" value="ECO:0007669"/>
    <property type="project" value="UniProtKB-UniRule"/>
</dbReference>
<dbReference type="GO" id="GO:0004176">
    <property type="term" value="F:ATP-dependent peptidase activity"/>
    <property type="evidence" value="ECO:0000250"/>
    <property type="project" value="UniProtKB"/>
</dbReference>
<dbReference type="GO" id="GO:0043565">
    <property type="term" value="F:sequence-specific DNA binding"/>
    <property type="evidence" value="ECO:0007669"/>
    <property type="project" value="UniProtKB-UniRule"/>
</dbReference>
<dbReference type="GO" id="GO:0004252">
    <property type="term" value="F:serine-type endopeptidase activity"/>
    <property type="evidence" value="ECO:0007669"/>
    <property type="project" value="UniProtKB-UniRule"/>
</dbReference>
<dbReference type="GO" id="GO:0003697">
    <property type="term" value="F:single-stranded DNA binding"/>
    <property type="evidence" value="ECO:0000318"/>
    <property type="project" value="GO_Central"/>
</dbReference>
<dbReference type="GO" id="GO:0034599">
    <property type="term" value="P:cellular response to oxidative stress"/>
    <property type="evidence" value="ECO:0007669"/>
    <property type="project" value="UniProtKB-UniRule"/>
</dbReference>
<dbReference type="GO" id="GO:0051131">
    <property type="term" value="P:chaperone-mediated protein complex assembly"/>
    <property type="evidence" value="ECO:0000318"/>
    <property type="project" value="GO_Central"/>
</dbReference>
<dbReference type="GO" id="GO:0007005">
    <property type="term" value="P:mitochondrion organization"/>
    <property type="evidence" value="ECO:0000318"/>
    <property type="project" value="GO_Central"/>
</dbReference>
<dbReference type="GO" id="GO:0019941">
    <property type="term" value="P:modification-dependent protein catabolic process"/>
    <property type="evidence" value="ECO:0000314"/>
    <property type="project" value="UniProtKB"/>
</dbReference>
<dbReference type="GO" id="GO:0070407">
    <property type="term" value="P:oxidation-dependent protein catabolic process"/>
    <property type="evidence" value="ECO:0007669"/>
    <property type="project" value="UniProtKB-UniRule"/>
</dbReference>
<dbReference type="GO" id="GO:0006515">
    <property type="term" value="P:protein quality control for misfolded or incompletely synthesized proteins"/>
    <property type="evidence" value="ECO:0000318"/>
    <property type="project" value="GO_Central"/>
</dbReference>
<dbReference type="CDD" id="cd19500">
    <property type="entry name" value="RecA-like_Lon"/>
    <property type="match status" value="1"/>
</dbReference>
<dbReference type="FunFam" id="3.40.50.300:FF:000021">
    <property type="entry name" value="Lon protease homolog"/>
    <property type="match status" value="1"/>
</dbReference>
<dbReference type="FunFam" id="1.10.8.60:FF:000043">
    <property type="entry name" value="Lon protease homolog, mitochondrial"/>
    <property type="match status" value="1"/>
</dbReference>
<dbReference type="FunFam" id="1.20.5.5270:FF:000001">
    <property type="entry name" value="Lon protease homolog, mitochondrial"/>
    <property type="match status" value="1"/>
</dbReference>
<dbReference type="FunFam" id="1.20.58.1480:FF:000002">
    <property type="entry name" value="Lon protease homolog, mitochondrial"/>
    <property type="match status" value="1"/>
</dbReference>
<dbReference type="FunFam" id="2.30.130.40:FF:000004">
    <property type="entry name" value="Lon protease homolog, mitochondrial"/>
    <property type="match status" value="1"/>
</dbReference>
<dbReference type="FunFam" id="3.30.230.10:FF:000015">
    <property type="entry name" value="Lon protease homolog, mitochondrial"/>
    <property type="match status" value="1"/>
</dbReference>
<dbReference type="Gene3D" id="1.10.8.60">
    <property type="match status" value="1"/>
</dbReference>
<dbReference type="Gene3D" id="1.20.5.5270">
    <property type="match status" value="1"/>
</dbReference>
<dbReference type="Gene3D" id="1.20.58.1480">
    <property type="match status" value="1"/>
</dbReference>
<dbReference type="Gene3D" id="3.30.230.10">
    <property type="match status" value="1"/>
</dbReference>
<dbReference type="Gene3D" id="2.30.130.40">
    <property type="entry name" value="LON domain-like"/>
    <property type="match status" value="1"/>
</dbReference>
<dbReference type="Gene3D" id="3.40.50.300">
    <property type="entry name" value="P-loop containing nucleotide triphosphate hydrolases"/>
    <property type="match status" value="1"/>
</dbReference>
<dbReference type="HAMAP" id="MF_03120">
    <property type="entry name" value="lonm_euk"/>
    <property type="match status" value="1"/>
</dbReference>
<dbReference type="InterPro" id="IPR003593">
    <property type="entry name" value="AAA+_ATPase"/>
</dbReference>
<dbReference type="InterPro" id="IPR003959">
    <property type="entry name" value="ATPase_AAA_core"/>
</dbReference>
<dbReference type="InterPro" id="IPR004815">
    <property type="entry name" value="Lon_bac/euk-typ"/>
</dbReference>
<dbReference type="InterPro" id="IPR054594">
    <property type="entry name" value="Lon_lid"/>
</dbReference>
<dbReference type="InterPro" id="IPR008269">
    <property type="entry name" value="Lon_proteolytic"/>
</dbReference>
<dbReference type="InterPro" id="IPR027065">
    <property type="entry name" value="Lon_Prtase"/>
</dbReference>
<dbReference type="InterPro" id="IPR003111">
    <property type="entry name" value="Lon_prtase_N"/>
</dbReference>
<dbReference type="InterPro" id="IPR046336">
    <property type="entry name" value="Lon_prtase_N_sf"/>
</dbReference>
<dbReference type="InterPro" id="IPR027503">
    <property type="entry name" value="Lonm_euk"/>
</dbReference>
<dbReference type="InterPro" id="IPR027417">
    <property type="entry name" value="P-loop_NTPase"/>
</dbReference>
<dbReference type="InterPro" id="IPR008268">
    <property type="entry name" value="Peptidase_S16_AS"/>
</dbReference>
<dbReference type="InterPro" id="IPR015947">
    <property type="entry name" value="PUA-like_sf"/>
</dbReference>
<dbReference type="InterPro" id="IPR020568">
    <property type="entry name" value="Ribosomal_Su5_D2-typ_SF"/>
</dbReference>
<dbReference type="InterPro" id="IPR014721">
    <property type="entry name" value="Ribsml_uS5_D2-typ_fold_subgr"/>
</dbReference>
<dbReference type="NCBIfam" id="TIGR00763">
    <property type="entry name" value="lon"/>
    <property type="match status" value="1"/>
</dbReference>
<dbReference type="PANTHER" id="PTHR43718">
    <property type="entry name" value="LON PROTEASE"/>
    <property type="match status" value="1"/>
</dbReference>
<dbReference type="PANTHER" id="PTHR43718:SF2">
    <property type="entry name" value="LON PROTEASE HOMOLOG, MITOCHONDRIAL"/>
    <property type="match status" value="1"/>
</dbReference>
<dbReference type="Pfam" id="PF00004">
    <property type="entry name" value="AAA"/>
    <property type="match status" value="1"/>
</dbReference>
<dbReference type="Pfam" id="PF05362">
    <property type="entry name" value="Lon_C"/>
    <property type="match status" value="1"/>
</dbReference>
<dbReference type="Pfam" id="PF22667">
    <property type="entry name" value="Lon_lid"/>
    <property type="match status" value="1"/>
</dbReference>
<dbReference type="Pfam" id="PF02190">
    <property type="entry name" value="LON_substr_bdg"/>
    <property type="match status" value="1"/>
</dbReference>
<dbReference type="PRINTS" id="PR00830">
    <property type="entry name" value="ENDOLAPTASE"/>
</dbReference>
<dbReference type="SMART" id="SM00382">
    <property type="entry name" value="AAA"/>
    <property type="match status" value="1"/>
</dbReference>
<dbReference type="SMART" id="SM00464">
    <property type="entry name" value="LON"/>
    <property type="match status" value="1"/>
</dbReference>
<dbReference type="SUPFAM" id="SSF52540">
    <property type="entry name" value="P-loop containing nucleoside triphosphate hydrolases"/>
    <property type="match status" value="1"/>
</dbReference>
<dbReference type="SUPFAM" id="SSF88697">
    <property type="entry name" value="PUA domain-like"/>
    <property type="match status" value="1"/>
</dbReference>
<dbReference type="SUPFAM" id="SSF54211">
    <property type="entry name" value="Ribosomal protein S5 domain 2-like"/>
    <property type="match status" value="1"/>
</dbReference>
<dbReference type="PROSITE" id="PS51787">
    <property type="entry name" value="LON_N"/>
    <property type="match status" value="1"/>
</dbReference>
<dbReference type="PROSITE" id="PS51786">
    <property type="entry name" value="LON_PROTEOLYTIC"/>
    <property type="match status" value="1"/>
</dbReference>
<dbReference type="PROSITE" id="PS01046">
    <property type="entry name" value="LON_SER"/>
    <property type="match status" value="1"/>
</dbReference>
<name>LONM_BOVIN</name>
<comment type="function">
    <text evidence="1 5">ATP-dependent serine protease that mediates the selective degradation of misfolded, unassembled or oxidatively damaged polypeptides as well as certain short-lived regulatory proteins in the mitochondrial matrix. Endogenous substrates include mitochondrial steroidogenic acute regulatory (StAR) protein, DELE1, helicase Twinkle (TWNK) and the large ribosomal subunit protein MRPL32/bL32m. MRPL32/bL32m is protected from degradation by LONP1 when it is bound to a nucleic acid (RNA), but TWNK is not. May also have a chaperone function in the assembly of inner membrane protein complexes. Participates in the regulation of mitochondrial gene expression and in the maintenance of the integrity of the mitochondrial genome. Binds to mitochondrial promoters and RNA in a single-stranded, site-specific, and strand-specific manner. May regulate mitochondrial DNA replication and/or gene expression using site-specific, single-stranded DNA binding to target the degradation of regulatory proteins binding to adjacent sites in mitochondrial promoters.</text>
</comment>
<comment type="catalytic activity">
    <reaction evidence="1">
        <text>Hydrolysis of proteins in presence of ATP.</text>
        <dbReference type="EC" id="3.4.21.53"/>
    </reaction>
</comment>
<comment type="subunit">
    <text evidence="1">Homohexamer. Organized in a ring with a central cavity. The ATP-binding and proteolytic domains (AP-domain) form a hexameric chamber, while the N-terminal domain is arranged as a trimer of dimers. DNA and RNA binding is stimulated by substrate and inhibited by ATP binding. Interacts with TWNK and mitochondrial DNA polymerase subunit POLG.</text>
</comment>
<comment type="subcellular location">
    <subcellularLocation>
        <location evidence="1">Mitochondrion matrix</location>
    </subcellularLocation>
</comment>
<comment type="similarity">
    <text evidence="1">Belongs to the peptidase S16 family.</text>
</comment>
<feature type="transit peptide" description="Mitochondrion">
    <location>
        <begin position="1"/>
        <end position="67"/>
    </location>
</feature>
<feature type="chain" id="PRO_0000254960" description="Lon protease homolog, mitochondrial">
    <location>
        <begin position="68"/>
        <end position="961"/>
    </location>
</feature>
<feature type="domain" description="Lon N-terminal" evidence="3">
    <location>
        <begin position="125"/>
        <end position="371"/>
    </location>
</feature>
<feature type="domain" description="Lon proteolytic" evidence="2">
    <location>
        <begin position="760"/>
        <end position="951"/>
    </location>
</feature>
<feature type="region of interest" description="Disordered" evidence="4">
    <location>
        <begin position="76"/>
        <end position="103"/>
    </location>
</feature>
<feature type="region of interest" description="Disordered" evidence="4">
    <location>
        <begin position="220"/>
        <end position="262"/>
    </location>
</feature>
<feature type="region of interest" description="Disordered" evidence="4">
    <location>
        <begin position="784"/>
        <end position="803"/>
    </location>
</feature>
<feature type="compositionally biased region" description="Basic residues" evidence="4">
    <location>
        <begin position="235"/>
        <end position="244"/>
    </location>
</feature>
<feature type="compositionally biased region" description="Basic and acidic residues" evidence="4">
    <location>
        <begin position="245"/>
        <end position="257"/>
    </location>
</feature>
<feature type="compositionally biased region" description="Basic and acidic residues" evidence="4">
    <location>
        <begin position="784"/>
        <end position="801"/>
    </location>
</feature>
<feature type="active site" evidence="1">
    <location>
        <position position="857"/>
    </location>
</feature>
<feature type="active site" evidence="1">
    <location>
        <position position="900"/>
    </location>
</feature>
<feature type="binding site" evidence="1">
    <location>
        <begin position="524"/>
        <end position="531"/>
    </location>
    <ligand>
        <name>ATP</name>
        <dbReference type="ChEBI" id="CHEBI:30616"/>
    </ligand>
</feature>
<feature type="sequence conflict" description="In Ref. 2; AAI33506." evidence="6" ref="2">
    <original>H</original>
    <variation>R</variation>
    <location>
        <position position="159"/>
    </location>
</feature>
<protein>
    <recommendedName>
        <fullName evidence="1">Lon protease homolog, mitochondrial</fullName>
        <ecNumber evidence="1">3.4.21.53</ecNumber>
    </recommendedName>
    <alternativeName>
        <fullName evidence="1">Lon protease-like protein</fullName>
        <shortName evidence="1">LONP</shortName>
    </alternativeName>
    <alternativeName>
        <fullName evidence="1">Mitochondrial ATP-dependent protease Lon</fullName>
    </alternativeName>
    <alternativeName>
        <fullName evidence="1">Serine protease 15</fullName>
    </alternativeName>
</protein>
<organism>
    <name type="scientific">Bos taurus</name>
    <name type="common">Bovine</name>
    <dbReference type="NCBI Taxonomy" id="9913"/>
    <lineage>
        <taxon>Eukaryota</taxon>
        <taxon>Metazoa</taxon>
        <taxon>Chordata</taxon>
        <taxon>Craniata</taxon>
        <taxon>Vertebrata</taxon>
        <taxon>Euteleostomi</taxon>
        <taxon>Mammalia</taxon>
        <taxon>Eutheria</taxon>
        <taxon>Laurasiatheria</taxon>
        <taxon>Artiodactyla</taxon>
        <taxon>Ruminantia</taxon>
        <taxon>Pecora</taxon>
        <taxon>Bovidae</taxon>
        <taxon>Bovinae</taxon>
        <taxon>Bos</taxon>
    </lineage>
</organism>
<evidence type="ECO:0000255" key="1">
    <source>
        <dbReference type="HAMAP-Rule" id="MF_03120"/>
    </source>
</evidence>
<evidence type="ECO:0000255" key="2">
    <source>
        <dbReference type="PROSITE-ProRule" id="PRU01122"/>
    </source>
</evidence>
<evidence type="ECO:0000255" key="3">
    <source>
        <dbReference type="PROSITE-ProRule" id="PRU01123"/>
    </source>
</evidence>
<evidence type="ECO:0000256" key="4">
    <source>
        <dbReference type="SAM" id="MobiDB-lite"/>
    </source>
</evidence>
<evidence type="ECO:0000269" key="5">
    <source>
    </source>
</evidence>
<evidence type="ECO:0000305" key="6"/>